<feature type="chain" id="PRO_0000430440" description="Glycosyltransferase GtfE">
    <location>
        <begin position="1"/>
        <end position="409"/>
    </location>
</feature>
<dbReference type="EC" id="2.4.1.-"/>
<dbReference type="EMBL" id="AF351622">
    <property type="protein sequence ID" value="AAK31353.1"/>
    <property type="molecule type" value="Genomic_DNA"/>
</dbReference>
<dbReference type="SMR" id="Q9AFC6"/>
<dbReference type="STRING" id="31958.SD37_33685"/>
<dbReference type="CAZy" id="GT1">
    <property type="family name" value="Glycosyltransferase Family 1"/>
</dbReference>
<dbReference type="eggNOG" id="COG1819">
    <property type="taxonomic scope" value="Bacteria"/>
</dbReference>
<dbReference type="UniPathway" id="UPA00162"/>
<dbReference type="GO" id="GO:0016758">
    <property type="term" value="F:hexosyltransferase activity"/>
    <property type="evidence" value="ECO:0000314"/>
    <property type="project" value="UniProtKB"/>
</dbReference>
<dbReference type="GO" id="GO:0008194">
    <property type="term" value="F:UDP-glycosyltransferase activity"/>
    <property type="evidence" value="ECO:0007669"/>
    <property type="project" value="InterPro"/>
</dbReference>
<dbReference type="GO" id="GO:0005975">
    <property type="term" value="P:carbohydrate metabolic process"/>
    <property type="evidence" value="ECO:0007669"/>
    <property type="project" value="InterPro"/>
</dbReference>
<dbReference type="GO" id="GO:0030259">
    <property type="term" value="P:lipid glycosylation"/>
    <property type="evidence" value="ECO:0007669"/>
    <property type="project" value="InterPro"/>
</dbReference>
<dbReference type="GO" id="GO:0033072">
    <property type="term" value="P:vancomycin biosynthetic process"/>
    <property type="evidence" value="ECO:0000314"/>
    <property type="project" value="UniProtKB"/>
</dbReference>
<dbReference type="CDD" id="cd03784">
    <property type="entry name" value="GT1_Gtf-like"/>
    <property type="match status" value="1"/>
</dbReference>
<dbReference type="FunFam" id="3.40.50.2000:FF:000292">
    <property type="entry name" value="Glycosyltransferase GtfE"/>
    <property type="match status" value="1"/>
</dbReference>
<dbReference type="FunFam" id="3.40.50.2000:FF:000009">
    <property type="entry name" value="Sterol 3-beta-glucosyltransferase UGT80A2"/>
    <property type="match status" value="1"/>
</dbReference>
<dbReference type="Gene3D" id="3.40.50.2000">
    <property type="entry name" value="Glycogen Phosphorylase B"/>
    <property type="match status" value="2"/>
</dbReference>
<dbReference type="InterPro" id="IPR010610">
    <property type="entry name" value="EryCIII-like_C"/>
</dbReference>
<dbReference type="InterPro" id="IPR050426">
    <property type="entry name" value="Glycosyltransferase_28"/>
</dbReference>
<dbReference type="InterPro" id="IPR004276">
    <property type="entry name" value="GlycoTrans_28_N"/>
</dbReference>
<dbReference type="InterPro" id="IPR002213">
    <property type="entry name" value="UDP_glucos_trans"/>
</dbReference>
<dbReference type="PANTHER" id="PTHR48050">
    <property type="entry name" value="STEROL 3-BETA-GLUCOSYLTRANSFERASE"/>
    <property type="match status" value="1"/>
</dbReference>
<dbReference type="PANTHER" id="PTHR48050:SF13">
    <property type="entry name" value="STEROL 3-BETA-GLUCOSYLTRANSFERASE UGT80A2"/>
    <property type="match status" value="1"/>
</dbReference>
<dbReference type="Pfam" id="PF06722">
    <property type="entry name" value="EryCIII-like_C"/>
    <property type="match status" value="1"/>
</dbReference>
<dbReference type="Pfam" id="PF03033">
    <property type="entry name" value="Glyco_transf_28"/>
    <property type="match status" value="1"/>
</dbReference>
<dbReference type="SUPFAM" id="SSF53756">
    <property type="entry name" value="UDP-Glycosyltransferase/glycogen phosphorylase"/>
    <property type="match status" value="1"/>
</dbReference>
<name>GTFE_AMYOR</name>
<protein>
    <recommendedName>
        <fullName>Glycosyltransferase GtfE</fullName>
        <ecNumber>2.4.1.-</ecNumber>
    </recommendedName>
</protein>
<comment type="function">
    <text evidence="1 2">D-glucosyltransferase that acts on the aglycone core, transferring D-glucose to the phenolic hydroxyl of OH-Phegly(4) to form a devancoaminyl-vancomycin (DVV) intermediate in the biosynthesis of glycopeptide antibiotic vancomycin. Also able to glycosylate A47934, an antibiotic with a teicoplanin-like heptapeptide, but lacking sugar residues.</text>
</comment>
<comment type="pathway">
    <text evidence="1">Antibiotic biosynthesis; vancomycin biosynthesis.</text>
</comment>
<comment type="miscellaneous">
    <text>In A.orientalis different glycosyltransferases are involved in biosynthesis of the vancomycin group of antibiotics. GtfA (AC P96558), GtfB (AC P96559) and GtfC (AC P96560) are involved in biosynthesis of antibiotic chloroeremomycin, while GtfD (AC Q9AFC7) and GtfE are involved in biosynthesis of vancomycin.</text>
</comment>
<comment type="similarity">
    <text evidence="3">Belongs to the glycosyltransferase 28 family.</text>
</comment>
<accession>Q9AFC6</accession>
<organism>
    <name type="scientific">Amycolatopsis orientalis</name>
    <name type="common">Nocardia orientalis</name>
    <dbReference type="NCBI Taxonomy" id="31958"/>
    <lineage>
        <taxon>Bacteria</taxon>
        <taxon>Bacillati</taxon>
        <taxon>Actinomycetota</taxon>
        <taxon>Actinomycetes</taxon>
        <taxon>Pseudonocardiales</taxon>
        <taxon>Pseudonocardiaceae</taxon>
        <taxon>Amycolatopsis</taxon>
    </lineage>
</organism>
<reference key="1">
    <citation type="journal article" date="2001" name="Biochemistry">
        <title>Tandem action of glycosyltransferases in the maturation of vancomycin and teicoplanin aglycones: novel glycopeptides.</title>
        <authorList>
            <person name="Losey H.C."/>
            <person name="Peczuh M.W."/>
            <person name="Chen Z."/>
            <person name="Eggert U.S."/>
            <person name="Dong S.D."/>
            <person name="Pelczer I."/>
            <person name="Kahne D."/>
            <person name="Walsh C.T."/>
        </authorList>
    </citation>
    <scope>NUCLEOTIDE SEQUENCE [GENOMIC DNA]</scope>
    <scope>FUNCTION</scope>
    <scope>PATHWAY</scope>
    <source>
        <strain>ATCC 19795 / DSM 40040 / CBS 547.68 / JCM 4235 / KCTC 9412 / NBRC 12806 / NCIMB 12945 / M43-05865</strain>
    </source>
</reference>
<reference key="2">
    <citation type="journal article" date="1997" name="Chem. Biol.">
        <title>Production of hybrid glycopeptide antibiotics in vitro and in Streptomyces toyocaensis.</title>
        <authorList>
            <person name="Solenberg P.J."/>
            <person name="Matsushima P."/>
            <person name="Stack D.R."/>
            <person name="Wilkie S.C."/>
            <person name="Thompson R.C."/>
            <person name="Baltz R.H."/>
        </authorList>
    </citation>
    <scope>FUNCTION</scope>
</reference>
<proteinExistence type="inferred from homology"/>
<keyword id="KW-0045">Antibiotic biosynthesis</keyword>
<keyword id="KW-0328">Glycosyltransferase</keyword>
<keyword id="KW-0808">Transferase</keyword>
<evidence type="ECO:0000269" key="1">
    <source>
    </source>
</evidence>
<evidence type="ECO:0000269" key="2">
    <source>
    </source>
</evidence>
<evidence type="ECO:0000305" key="3"/>
<gene>
    <name type="primary">gtfE</name>
</gene>
<sequence>MRVLLSTCGSRGDVEPLVALAVRLRARGAEVRMCAPPDCADRLAEVGVPHLPLGRSARPAAAGEAKPLTAEDMLRFTTETIAMQFDRIPAAAEGCDAVVTTGLLAAALGVRSVAEKLGIPYFYAFHCPSYVPSPYYAPPPPLGEPPAPEGTDIRALWERNNQSAFRRYGAPLKSQRAAIGLPPVEDIFEHGYTDHPWMAADQVLAPLQPTDLDAVQTGAWILPDERPLSPEMEAFLDAGTPPVYLGFGSLRAPADAAKVAIEAIRAHGRRVILSRGWADLVLPDDRDDCFATGEVNQQVLFRRVAAVIHHGGAGTTHVATRAGAPQILVPQIADQPYYAGRVAELGIGVAHDGPTPTFESLSAALTTALAPETRVRAEAVAGTVLTDGAAAAADLLFAAVGEEKPAVPA</sequence>